<accession>C6DEF0</accession>
<comment type="function">
    <text evidence="1">Inhibits the supercoiling activity of DNA gyrase. Acts by inhibiting DNA gyrase at an early step, prior to (or at the step of) binding of DNA by the gyrase. It protects cells against toxins that target DNA gyrase, by inhibiting activity of these toxins and reducing the formation of lethal double-strand breaks in the cell.</text>
</comment>
<comment type="subunit">
    <text evidence="1">Interacts with DNA gyrase.</text>
</comment>
<comment type="subcellular location">
    <subcellularLocation>
        <location evidence="1">Cytoplasm</location>
    </subcellularLocation>
</comment>
<comment type="similarity">
    <text evidence="1">Belongs to the DNA gyrase inhibitor family.</text>
</comment>
<keyword id="KW-0963">Cytoplasm</keyword>
<keyword id="KW-0346">Stress response</keyword>
<feature type="chain" id="PRO_0000409704" description="DNA gyrase inhibitor">
    <location>
        <begin position="1"/>
        <end position="154"/>
    </location>
</feature>
<protein>
    <recommendedName>
        <fullName evidence="1">DNA gyrase inhibitor</fullName>
    </recommendedName>
</protein>
<dbReference type="EMBL" id="CP001657">
    <property type="protein sequence ID" value="ACT12635.1"/>
    <property type="molecule type" value="Genomic_DNA"/>
</dbReference>
<dbReference type="RefSeq" id="WP_015839855.1">
    <property type="nucleotide sequence ID" value="NC_012917.1"/>
</dbReference>
<dbReference type="SMR" id="C6DEF0"/>
<dbReference type="STRING" id="561230.PC1_1593"/>
<dbReference type="KEGG" id="pct:PC1_1593"/>
<dbReference type="eggNOG" id="COG3449">
    <property type="taxonomic scope" value="Bacteria"/>
</dbReference>
<dbReference type="HOGENOM" id="CLU_113664_3_2_6"/>
<dbReference type="OrthoDB" id="282744at2"/>
<dbReference type="Proteomes" id="UP000002736">
    <property type="component" value="Chromosome"/>
</dbReference>
<dbReference type="GO" id="GO:0005737">
    <property type="term" value="C:cytoplasm"/>
    <property type="evidence" value="ECO:0007669"/>
    <property type="project" value="UniProtKB-SubCell"/>
</dbReference>
<dbReference type="GO" id="GO:0008657">
    <property type="term" value="F:DNA topoisomerase type II (double strand cut, ATP-hydrolyzing) inhibitor activity"/>
    <property type="evidence" value="ECO:0007669"/>
    <property type="project" value="UniProtKB-UniRule"/>
</dbReference>
<dbReference type="Gene3D" id="3.20.80.10">
    <property type="entry name" value="Regulatory factor, effector binding domain"/>
    <property type="match status" value="1"/>
</dbReference>
<dbReference type="HAMAP" id="MF_01896">
    <property type="entry name" value="DNA_gyrase_inhibitor"/>
    <property type="match status" value="1"/>
</dbReference>
<dbReference type="InterPro" id="IPR010499">
    <property type="entry name" value="AraC_E-bd"/>
</dbReference>
<dbReference type="InterPro" id="IPR050908">
    <property type="entry name" value="DNA_gyrase_inhibitor"/>
</dbReference>
<dbReference type="InterPro" id="IPR024911">
    <property type="entry name" value="DNA_gyrase_inhibitor_GyrI"/>
</dbReference>
<dbReference type="InterPro" id="IPR029442">
    <property type="entry name" value="GyrI-like"/>
</dbReference>
<dbReference type="InterPro" id="IPR011256">
    <property type="entry name" value="Reg_factor_effector_dom_sf"/>
</dbReference>
<dbReference type="PANTHER" id="PTHR40055:SF2">
    <property type="entry name" value="DNA GYRASE INHIBITOR"/>
    <property type="match status" value="1"/>
</dbReference>
<dbReference type="PANTHER" id="PTHR40055">
    <property type="entry name" value="TRANSCRIPTIONAL REGULATOR YGIV-RELATED"/>
    <property type="match status" value="1"/>
</dbReference>
<dbReference type="Pfam" id="PF06445">
    <property type="entry name" value="GyrI-like"/>
    <property type="match status" value="1"/>
</dbReference>
<dbReference type="SMART" id="SM00871">
    <property type="entry name" value="AraC_E_bind"/>
    <property type="match status" value="1"/>
</dbReference>
<dbReference type="SUPFAM" id="SSF55136">
    <property type="entry name" value="Probable bacterial effector-binding domain"/>
    <property type="match status" value="1"/>
</dbReference>
<evidence type="ECO:0000255" key="1">
    <source>
        <dbReference type="HAMAP-Rule" id="MF_01896"/>
    </source>
</evidence>
<proteinExistence type="inferred from homology"/>
<organism>
    <name type="scientific">Pectobacterium carotovorum subsp. carotovorum (strain PC1)</name>
    <dbReference type="NCBI Taxonomy" id="561230"/>
    <lineage>
        <taxon>Bacteria</taxon>
        <taxon>Pseudomonadati</taxon>
        <taxon>Pseudomonadota</taxon>
        <taxon>Gammaproteobacteria</taxon>
        <taxon>Enterobacterales</taxon>
        <taxon>Pectobacteriaceae</taxon>
        <taxon>Pectobacterium</taxon>
    </lineage>
</organism>
<sequence length="154" mass="17370">MSIRIELAESMEVLSLRVVGPYYEKIPQGFDEILSWAREHHLSIDKSLAFYWDDPSKVEADELRADVAITCKEMPSTLPEDVGIRREVIPGGLYAVTHTIVENGDFAKAWDDFYKAINAQGYCPAGDICYESYLCDGSNGKWDIEIWQSVEAAN</sequence>
<name>SBMC_PECCP</name>
<gene>
    <name evidence="1" type="primary">sbmC</name>
    <name type="ordered locus">PC1_1593</name>
</gene>
<reference key="1">
    <citation type="submission" date="2009-07" db="EMBL/GenBank/DDBJ databases">
        <title>Complete sequence of Pectobacterium carotovorum subsp. carotovorum PC1.</title>
        <authorList>
            <consortium name="US DOE Joint Genome Institute"/>
            <person name="Lucas S."/>
            <person name="Copeland A."/>
            <person name="Lapidus A."/>
            <person name="Glavina del Rio T."/>
            <person name="Tice H."/>
            <person name="Bruce D."/>
            <person name="Goodwin L."/>
            <person name="Pitluck S."/>
            <person name="Munk A.C."/>
            <person name="Brettin T."/>
            <person name="Detter J.C."/>
            <person name="Han C."/>
            <person name="Tapia R."/>
            <person name="Larimer F."/>
            <person name="Land M."/>
            <person name="Hauser L."/>
            <person name="Kyrpides N."/>
            <person name="Mikhailova N."/>
            <person name="Balakrishnan V."/>
            <person name="Glasner J."/>
            <person name="Perna N.T."/>
        </authorList>
    </citation>
    <scope>NUCLEOTIDE SEQUENCE [LARGE SCALE GENOMIC DNA]</scope>
    <source>
        <strain>PC1</strain>
    </source>
</reference>